<comment type="function">
    <text evidence="4 5 7">RuBisCO catalyzes two reactions: the carboxylation of D-ribulose 1,5-bisphosphate, the primary event in carbon dioxide fixation, as well as the oxidative fragmentation of the pentose substrate in the photorespiration process (PubMed:2928307, PubMed:3681999). Both reactions occur simultaneously and in competition at the same active site.</text>
</comment>
<comment type="catalytic activity">
    <reaction evidence="5">
        <text>2 (2R)-3-phosphoglycerate + 2 H(+) = D-ribulose 1,5-bisphosphate + CO2 + H2O</text>
        <dbReference type="Rhea" id="RHEA:23124"/>
        <dbReference type="ChEBI" id="CHEBI:15377"/>
        <dbReference type="ChEBI" id="CHEBI:15378"/>
        <dbReference type="ChEBI" id="CHEBI:16526"/>
        <dbReference type="ChEBI" id="CHEBI:57870"/>
        <dbReference type="ChEBI" id="CHEBI:58272"/>
        <dbReference type="EC" id="4.1.1.39"/>
    </reaction>
</comment>
<comment type="catalytic activity">
    <reaction>
        <text>D-ribulose 1,5-bisphosphate + O2 = 2-phosphoglycolate + (2R)-3-phosphoglycerate + 2 H(+)</text>
        <dbReference type="Rhea" id="RHEA:36631"/>
        <dbReference type="ChEBI" id="CHEBI:15378"/>
        <dbReference type="ChEBI" id="CHEBI:15379"/>
        <dbReference type="ChEBI" id="CHEBI:57870"/>
        <dbReference type="ChEBI" id="CHEBI:58033"/>
        <dbReference type="ChEBI" id="CHEBI:58272"/>
    </reaction>
</comment>
<comment type="cofactor">
    <cofactor>
        <name>Mg(2+)</name>
        <dbReference type="ChEBI" id="CHEBI:18420"/>
    </cofactor>
    <text>Binds 1 Mg(2+) ion per subunit.</text>
</comment>
<comment type="subunit">
    <text evidence="3 5">Heterohexadecamer of 8 large chains and 8 small chains; disulfide-linked. The disulfide link is formed within the large subunit homodimers.</text>
</comment>
<comment type="subcellular location">
    <subcellularLocation>
        <location>Plastid</location>
        <location>Chloroplast</location>
    </subcellularLocation>
</comment>
<comment type="PTM">
    <text evidence="1 3">The disulfide bond which can form between Cys-247 in the large chain dimeric partners within the hexadecamer appears to be associated with oxidative stress and protein turnover (By similarity). The disulfide bonds reported in 3RUB and 4RUB may be the result of oxidation during crystallization (PubMed:1512238).</text>
</comment>
<comment type="miscellaneous">
    <text evidence="3">The basic functional RuBisCO is composed of a large chain homodimer in a 'head-to-tail' conformation. In form I RuBisCO this homodimer is arranged in a barrel-like tetramer with the small subunits forming a tetrameric 'cap' on each end of the 'barrel'.</text>
</comment>
<comment type="similarity">
    <text evidence="7">Belongs to the RuBisCO large chain family. Type I subfamily.</text>
</comment>
<name>RBL_TOBAC</name>
<gene>
    <name type="primary">rbcL</name>
    <name type="synonym">rbcA</name>
</gene>
<protein>
    <recommendedName>
        <fullName>Ribulose bisphosphate carboxylase large chain</fullName>
        <shortName>RuBisCO large subunit</shortName>
        <ecNumber evidence="5">4.1.1.39</ecNumber>
    </recommendedName>
</protein>
<proteinExistence type="evidence at protein level"/>
<keyword id="KW-0002">3D-structure</keyword>
<keyword id="KW-0007">Acetylation</keyword>
<keyword id="KW-0113">Calvin cycle</keyword>
<keyword id="KW-0120">Carbon dioxide fixation</keyword>
<keyword id="KW-0150">Chloroplast</keyword>
<keyword id="KW-0903">Direct protein sequencing</keyword>
<keyword id="KW-1015">Disulfide bond</keyword>
<keyword id="KW-0456">Lyase</keyword>
<keyword id="KW-0460">Magnesium</keyword>
<keyword id="KW-0479">Metal-binding</keyword>
<keyword id="KW-0488">Methylation</keyword>
<keyword id="KW-0503">Monooxygenase</keyword>
<keyword id="KW-0560">Oxidoreductase</keyword>
<keyword id="KW-0601">Photorespiration</keyword>
<keyword id="KW-0602">Photosynthesis</keyword>
<keyword id="KW-0934">Plastid</keyword>
<keyword id="KW-1185">Reference proteome</keyword>
<feature type="propeptide" id="PRO_0000031427" evidence="4">
    <location>
        <begin position="1"/>
        <end position="2"/>
    </location>
</feature>
<feature type="chain" id="PRO_0000031428" description="Ribulose bisphosphate carboxylase large chain">
    <location>
        <begin position="3"/>
        <end position="477"/>
    </location>
</feature>
<feature type="active site" description="Proton acceptor">
    <location>
        <position position="175"/>
    </location>
</feature>
<feature type="active site" description="Proton acceptor">
    <location>
        <position position="294"/>
    </location>
</feature>
<feature type="binding site" description="in homodimeric partner">
    <location>
        <position position="123"/>
    </location>
    <ligand>
        <name>substrate</name>
    </ligand>
</feature>
<feature type="binding site">
    <location>
        <position position="173"/>
    </location>
    <ligand>
        <name>substrate</name>
    </ligand>
</feature>
<feature type="binding site">
    <location>
        <position position="177"/>
    </location>
    <ligand>
        <name>substrate</name>
    </ligand>
</feature>
<feature type="binding site" description="via carbamate group">
    <location>
        <position position="201"/>
    </location>
    <ligand>
        <name>Mg(2+)</name>
        <dbReference type="ChEBI" id="CHEBI:18420"/>
    </ligand>
</feature>
<feature type="binding site">
    <location>
        <position position="203"/>
    </location>
    <ligand>
        <name>Mg(2+)</name>
        <dbReference type="ChEBI" id="CHEBI:18420"/>
    </ligand>
</feature>
<feature type="binding site">
    <location>
        <position position="204"/>
    </location>
    <ligand>
        <name>Mg(2+)</name>
        <dbReference type="ChEBI" id="CHEBI:18420"/>
    </ligand>
</feature>
<feature type="binding site">
    <location>
        <position position="295"/>
    </location>
    <ligand>
        <name>substrate</name>
    </ligand>
</feature>
<feature type="binding site">
    <location>
        <position position="327"/>
    </location>
    <ligand>
        <name>substrate</name>
    </ligand>
</feature>
<feature type="binding site">
    <location>
        <position position="379"/>
    </location>
    <ligand>
        <name>substrate</name>
    </ligand>
</feature>
<feature type="site" description="Transition state stabilizer">
    <location>
        <position position="334"/>
    </location>
</feature>
<feature type="modified residue" description="N-acetylproline" evidence="4">
    <location>
        <position position="3"/>
    </location>
</feature>
<feature type="modified residue" description="N6,N6,N6-trimethyllysine" evidence="4">
    <location>
        <position position="14"/>
    </location>
</feature>
<feature type="modified residue" description="N6-carboxylysine" evidence="2">
    <location>
        <position position="201"/>
    </location>
</feature>
<feature type="disulfide bond" description="Interchain; in linked form" evidence="2 3 5">
    <location>
        <position position="247"/>
    </location>
</feature>
<feature type="sequence variant" evidence="6">
    <original>F</original>
    <variation>V</variation>
    <location>
        <position position="394"/>
    </location>
</feature>
<feature type="sequence variant" evidence="6">
    <original>G</original>
    <variation>M</variation>
    <location>
        <position position="405"/>
    </location>
</feature>
<feature type="sequence conflict" description="In Ref. 3; AA sequence." evidence="7" ref="3">
    <original>C</original>
    <variation>G</variation>
    <location>
        <position position="284"/>
    </location>
</feature>
<feature type="sequence conflict" description="In Ref. 1; AAD15025." evidence="7" ref="1">
    <original>V</original>
    <variation>E</variation>
    <location>
        <position position="377"/>
    </location>
</feature>
<feature type="helix" evidence="8">
    <location>
        <begin position="21"/>
        <end position="24"/>
    </location>
</feature>
<feature type="strand" evidence="10">
    <location>
        <begin position="36"/>
        <end position="44"/>
    </location>
</feature>
<feature type="helix" evidence="10">
    <location>
        <begin position="50"/>
        <end position="59"/>
    </location>
</feature>
<feature type="turn" evidence="10">
    <location>
        <begin position="60"/>
        <end position="62"/>
    </location>
</feature>
<feature type="helix" evidence="10">
    <location>
        <begin position="71"/>
        <end position="73"/>
    </location>
</feature>
<feature type="helix" evidence="10">
    <location>
        <begin position="77"/>
        <end position="80"/>
    </location>
</feature>
<feature type="strand" evidence="10">
    <location>
        <begin position="83"/>
        <end position="89"/>
    </location>
</feature>
<feature type="strand" evidence="8">
    <location>
        <begin position="91"/>
        <end position="95"/>
    </location>
</feature>
<feature type="strand" evidence="10">
    <location>
        <begin position="97"/>
        <end position="103"/>
    </location>
</feature>
<feature type="helix" evidence="10">
    <location>
        <begin position="105"/>
        <end position="107"/>
    </location>
</feature>
<feature type="helix" evidence="10">
    <location>
        <begin position="113"/>
        <end position="121"/>
    </location>
</feature>
<feature type="helix" evidence="10">
    <location>
        <begin position="124"/>
        <end position="126"/>
    </location>
</feature>
<feature type="strand" evidence="10">
    <location>
        <begin position="130"/>
        <end position="139"/>
    </location>
</feature>
<feature type="helix" evidence="10">
    <location>
        <begin position="142"/>
        <end position="145"/>
    </location>
</feature>
<feature type="strand" evidence="8">
    <location>
        <begin position="151"/>
        <end position="153"/>
    </location>
</feature>
<feature type="helix" evidence="10">
    <location>
        <begin position="155"/>
        <end position="162"/>
    </location>
</feature>
<feature type="strand" evidence="10">
    <location>
        <begin position="169"/>
        <end position="173"/>
    </location>
</feature>
<feature type="strand" evidence="10">
    <location>
        <begin position="175"/>
        <end position="178"/>
    </location>
</feature>
<feature type="helix" evidence="10">
    <location>
        <begin position="182"/>
        <end position="194"/>
    </location>
</feature>
<feature type="strand" evidence="10">
    <location>
        <begin position="198"/>
        <end position="201"/>
    </location>
</feature>
<feature type="strand" evidence="10">
    <location>
        <begin position="207"/>
        <end position="209"/>
    </location>
</feature>
<feature type="strand" evidence="9">
    <location>
        <begin position="210"/>
        <end position="212"/>
    </location>
</feature>
<feature type="helix" evidence="10">
    <location>
        <begin position="214"/>
        <end position="232"/>
    </location>
</feature>
<feature type="strand" evidence="10">
    <location>
        <begin position="237"/>
        <end position="241"/>
    </location>
</feature>
<feature type="helix" evidence="10">
    <location>
        <begin position="247"/>
        <end position="260"/>
    </location>
</feature>
<feature type="strand" evidence="10">
    <location>
        <begin position="263"/>
        <end position="268"/>
    </location>
</feature>
<feature type="helix" evidence="10">
    <location>
        <begin position="269"/>
        <end position="272"/>
    </location>
</feature>
<feature type="helix" evidence="10">
    <location>
        <begin position="274"/>
        <end position="287"/>
    </location>
</feature>
<feature type="strand" evidence="10">
    <location>
        <begin position="290"/>
        <end position="294"/>
    </location>
</feature>
<feature type="helix" evidence="10">
    <location>
        <begin position="298"/>
        <end position="302"/>
    </location>
</feature>
<feature type="strand" evidence="10">
    <location>
        <begin position="307"/>
        <end position="309"/>
    </location>
</feature>
<feature type="helix" evidence="10">
    <location>
        <begin position="311"/>
        <end position="321"/>
    </location>
</feature>
<feature type="strand" evidence="10">
    <location>
        <begin position="324"/>
        <end position="327"/>
    </location>
</feature>
<feature type="strand" evidence="9">
    <location>
        <begin position="332"/>
        <end position="334"/>
    </location>
</feature>
<feature type="helix" evidence="10">
    <location>
        <begin position="336"/>
        <end position="350"/>
    </location>
</feature>
<feature type="strand" evidence="10">
    <location>
        <begin position="352"/>
        <end position="354"/>
    </location>
</feature>
<feature type="helix" evidence="10">
    <location>
        <begin position="358"/>
        <end position="360"/>
    </location>
</feature>
<feature type="strand" evidence="10">
    <location>
        <begin position="375"/>
        <end position="381"/>
    </location>
</feature>
<feature type="helix" evidence="10">
    <location>
        <begin position="384"/>
        <end position="386"/>
    </location>
</feature>
<feature type="helix" evidence="10">
    <location>
        <begin position="387"/>
        <end position="394"/>
    </location>
</feature>
<feature type="strand" evidence="10">
    <location>
        <begin position="396"/>
        <end position="403"/>
    </location>
</feature>
<feature type="turn" evidence="10">
    <location>
        <begin position="404"/>
        <end position="408"/>
    </location>
</feature>
<feature type="helix" evidence="10">
    <location>
        <begin position="413"/>
        <end position="432"/>
    </location>
</feature>
<feature type="helix" evidence="10">
    <location>
        <begin position="437"/>
        <end position="451"/>
    </location>
</feature>
<feature type="helix" evidence="10">
    <location>
        <begin position="453"/>
        <end position="466"/>
    </location>
</feature>
<organism>
    <name type="scientific">Nicotiana tabacum</name>
    <name type="common">Common tobacco</name>
    <dbReference type="NCBI Taxonomy" id="4097"/>
    <lineage>
        <taxon>Eukaryota</taxon>
        <taxon>Viridiplantae</taxon>
        <taxon>Streptophyta</taxon>
        <taxon>Embryophyta</taxon>
        <taxon>Tracheophyta</taxon>
        <taxon>Spermatophyta</taxon>
        <taxon>Magnoliopsida</taxon>
        <taxon>eudicotyledons</taxon>
        <taxon>Gunneridae</taxon>
        <taxon>Pentapetalae</taxon>
        <taxon>asterids</taxon>
        <taxon>lamiids</taxon>
        <taxon>Solanales</taxon>
        <taxon>Solanaceae</taxon>
        <taxon>Nicotianoideae</taxon>
        <taxon>Nicotianeae</taxon>
        <taxon>Nicotiana</taxon>
    </lineage>
</organism>
<reference key="1">
    <citation type="journal article" date="1982" name="Gene">
        <title>The nucleotide sequence of the tobacco chloroplast gene for the large subunit of ribulose-1,5-bisphosphate carboxylase/oxygenase.</title>
        <authorList>
            <person name="Shinozaki K."/>
            <person name="Sugiura M."/>
        </authorList>
    </citation>
    <scope>NUCLEOTIDE SEQUENCE [GENOMIC DNA]</scope>
</reference>
<reference key="2">
    <citation type="journal article" date="1986" name="EMBO J.">
        <title>The complete nucleotide sequence of the tobacco chloroplast genome: its gene organization and expression.</title>
        <authorList>
            <person name="Shinozaki K."/>
            <person name="Ohme M."/>
            <person name="Tanaka M."/>
            <person name="Wakasugi T."/>
            <person name="Hayashida N."/>
            <person name="Matsubayashi T."/>
            <person name="Zaita N."/>
            <person name="Chunwongse J."/>
            <person name="Obokata J."/>
            <person name="Yamaguchi-Shinozaki K."/>
            <person name="Ohto C."/>
            <person name="Torazawa K."/>
            <person name="Meng B.-Y."/>
            <person name="Sugita M."/>
            <person name="Deno H."/>
            <person name="Kamogashira T."/>
            <person name="Yamada K."/>
            <person name="Kusuda J."/>
            <person name="Takaiwa F."/>
            <person name="Kato A."/>
            <person name="Tohdoh N."/>
            <person name="Shimada H."/>
            <person name="Sugiura M."/>
        </authorList>
    </citation>
    <scope>NUCLEOTIDE SEQUENCE [LARGE SCALE GENOMIC DNA]</scope>
    <source>
        <strain>cv. Bright Yellow 4</strain>
    </source>
</reference>
<reference key="3">
    <citation type="journal article" date="1984" name="Biochim. Biophys. Acta">
        <title>Amino-acid sequence of the large subunit of D-ribulose bisphosphate carboxylase/oxygenase from Nicotiana tabacum.</title>
        <authorList>
            <person name="Amiri I."/>
            <person name="Salnikow J."/>
            <person name="Vater J."/>
        </authorList>
    </citation>
    <scope>PROTEIN SEQUENCE OF 5-477</scope>
    <scope>VARIANTS VAL-394 AND MET-405</scope>
</reference>
<reference key="4">
    <citation type="journal article" date="1989" name="Proc. Natl. Acad. Sci. U.S.A.">
        <title>Post-translational modifications in the large subunit of ribulose bisphosphate carboxylase/oxygenase.</title>
        <authorList>
            <person name="Houtz R.L."/>
            <person name="Stults J.T."/>
            <person name="Mulligan R.M."/>
            <person name="Tolbert N.E."/>
        </authorList>
    </citation>
    <scope>PROTEIN SEQUENCE OF 3-18</scope>
    <scope>FUNCTION</scope>
    <scope>ACETYLATION AT PRO-3</scope>
    <scope>METHYLATION AT LYS-14</scope>
</reference>
<reference key="5">
    <citation type="journal article" date="1987" name="J. Mol. Biol.">
        <title>A crystal form of ribulose-1,5-bisphosphate carboxylase/oxygenase from Nicotiana tabacum in the activated state.</title>
        <authorList>
            <person name="Suh S.W."/>
            <person name="Cascio D."/>
            <person name="Chapman M.S."/>
            <person name="Eisenberg D."/>
        </authorList>
    </citation>
    <scope>X-RAY CRYSTALLOGRAPHY (2.7 ANGSTROMS) OF ACTIVATED HOLOENZYME</scope>
    <scope>FUNCTION</scope>
    <scope>CATALYTIC ACTIVITY</scope>
    <scope>SUBUNIT</scope>
    <scope>DISULFIDE BOND</scope>
</reference>
<reference key="6">
    <citation type="journal article" date="1992" name="J. Biol. Chem.">
        <title>Crystal structure of the unactivated form of ribulose-1,5-bisphosphate carboxylase/oxygenase from tobacco refined at 2.0-A resolution.</title>
        <authorList>
            <person name="Curmi P.M.G."/>
            <person name="Cascio D."/>
            <person name="Sweet R.M."/>
            <person name="Eisenberg D."/>
            <person name="Schreuder H."/>
        </authorList>
    </citation>
    <scope>X-RAY CRYSTALLOGRAPHY (2.0 ANGSTROMS) OF UNACTIVATED HOLOENZYME</scope>
    <scope>SUBUNIT</scope>
    <scope>DISULFIDE BOND</scope>
    <source>
        <strain>cv. Turkish samsun</strain>
    </source>
</reference>
<reference key="7">
    <citation type="journal article" date="2000" name="J. Mol. Biol.">
        <title>The transition between the open and closed states of rubisco is triggered by the inter-phosphate distance of the bound bisphosphate.</title>
        <authorList>
            <person name="Duff A.P."/>
            <person name="Andrews T.J."/>
            <person name="Curmi P.M.G."/>
        </authorList>
    </citation>
    <scope>X-RAY CRYSTALLOGRAPHY (2.45 ANGSTROMS) OF 3-477 OF UNACTIVATED HOLOENZYME</scope>
    <scope>SUBUNIT</scope>
    <scope>DISULFIDE BOND</scope>
    <scope>CARBOXYLATION AT LYS-201</scope>
    <source>
        <strain>cv. Wisconsin-38</strain>
    </source>
</reference>
<dbReference type="EC" id="4.1.1.39" evidence="5"/>
<dbReference type="EMBL" id="J01450">
    <property type="protein sequence ID" value="AAD15025.1"/>
    <property type="molecule type" value="Genomic_DNA"/>
</dbReference>
<dbReference type="EMBL" id="Z00044">
    <property type="protein sequence ID" value="CAA77361.1"/>
    <property type="molecule type" value="Genomic_DNA"/>
</dbReference>
<dbReference type="PIR" id="A01095">
    <property type="entry name" value="RKNTL"/>
</dbReference>
<dbReference type="RefSeq" id="NP_054507.1">
    <property type="nucleotide sequence ID" value="NC_001879.2"/>
</dbReference>
<dbReference type="PDB" id="1EJ7">
    <property type="method" value="X-ray"/>
    <property type="resolution" value="2.45 A"/>
    <property type="chains" value="L=3-477"/>
</dbReference>
<dbReference type="PDB" id="1RLC">
    <property type="method" value="X-ray"/>
    <property type="resolution" value="2.70 A"/>
    <property type="chains" value="L=1-477"/>
</dbReference>
<dbReference type="PDB" id="1RLD">
    <property type="method" value="X-ray"/>
    <property type="resolution" value="2.50 A"/>
    <property type="chains" value="A/B=22-467"/>
</dbReference>
<dbReference type="PDB" id="3RUB">
    <property type="method" value="X-ray"/>
    <property type="resolution" value="2.00 A"/>
    <property type="chains" value="L=1-477"/>
</dbReference>
<dbReference type="PDB" id="4RUB">
    <property type="method" value="X-ray"/>
    <property type="resolution" value="2.70 A"/>
    <property type="chains" value="A/B/C/D=1-477"/>
</dbReference>
<dbReference type="PDBsum" id="1EJ7"/>
<dbReference type="PDBsum" id="1RLC"/>
<dbReference type="PDBsum" id="1RLD"/>
<dbReference type="PDBsum" id="3RUB"/>
<dbReference type="PDBsum" id="4RUB"/>
<dbReference type="SMR" id="P00876"/>
<dbReference type="DIP" id="DIP-42221N"/>
<dbReference type="IntAct" id="P00876">
    <property type="interactions" value="2"/>
</dbReference>
<dbReference type="MINT" id="P00876"/>
<dbReference type="iPTMnet" id="P00876"/>
<dbReference type="GeneID" id="800513"/>
<dbReference type="KEGG" id="nta:800513"/>
<dbReference type="OMA" id="HADPDEM"/>
<dbReference type="OrthoDB" id="1578724at2759"/>
<dbReference type="SABIO-RK" id="P00876"/>
<dbReference type="EvolutionaryTrace" id="P00876"/>
<dbReference type="Proteomes" id="UP000084051">
    <property type="component" value="Unplaced"/>
</dbReference>
<dbReference type="GO" id="GO:0009507">
    <property type="term" value="C:chloroplast"/>
    <property type="evidence" value="ECO:0007669"/>
    <property type="project" value="UniProtKB-SubCell"/>
</dbReference>
<dbReference type="GO" id="GO:0000287">
    <property type="term" value="F:magnesium ion binding"/>
    <property type="evidence" value="ECO:0007669"/>
    <property type="project" value="UniProtKB-UniRule"/>
</dbReference>
<dbReference type="GO" id="GO:0004497">
    <property type="term" value="F:monooxygenase activity"/>
    <property type="evidence" value="ECO:0007669"/>
    <property type="project" value="UniProtKB-KW"/>
</dbReference>
<dbReference type="GO" id="GO:0016984">
    <property type="term" value="F:ribulose-bisphosphate carboxylase activity"/>
    <property type="evidence" value="ECO:0007669"/>
    <property type="project" value="UniProtKB-UniRule"/>
</dbReference>
<dbReference type="GO" id="GO:0009853">
    <property type="term" value="P:photorespiration"/>
    <property type="evidence" value="ECO:0007669"/>
    <property type="project" value="UniProtKB-KW"/>
</dbReference>
<dbReference type="GO" id="GO:0019253">
    <property type="term" value="P:reductive pentose-phosphate cycle"/>
    <property type="evidence" value="ECO:0007669"/>
    <property type="project" value="UniProtKB-UniRule"/>
</dbReference>
<dbReference type="CDD" id="cd08212">
    <property type="entry name" value="RuBisCO_large_I"/>
    <property type="match status" value="1"/>
</dbReference>
<dbReference type="FunFam" id="3.20.20.110:FF:000001">
    <property type="entry name" value="Ribulose bisphosphate carboxylase large chain"/>
    <property type="match status" value="1"/>
</dbReference>
<dbReference type="FunFam" id="3.30.70.150:FF:000001">
    <property type="entry name" value="Ribulose bisphosphate carboxylase large chain"/>
    <property type="match status" value="1"/>
</dbReference>
<dbReference type="Gene3D" id="3.20.20.110">
    <property type="entry name" value="Ribulose bisphosphate carboxylase, large subunit, C-terminal domain"/>
    <property type="match status" value="1"/>
</dbReference>
<dbReference type="Gene3D" id="3.30.70.150">
    <property type="entry name" value="RuBisCO large subunit, N-terminal domain"/>
    <property type="match status" value="1"/>
</dbReference>
<dbReference type="HAMAP" id="MF_01338">
    <property type="entry name" value="RuBisCO_L_type1"/>
    <property type="match status" value="1"/>
</dbReference>
<dbReference type="InterPro" id="IPR033966">
    <property type="entry name" value="RuBisCO"/>
</dbReference>
<dbReference type="InterPro" id="IPR020878">
    <property type="entry name" value="RuBisCo_large_chain_AS"/>
</dbReference>
<dbReference type="InterPro" id="IPR000685">
    <property type="entry name" value="RuBisCO_lsu_C"/>
</dbReference>
<dbReference type="InterPro" id="IPR036376">
    <property type="entry name" value="RuBisCO_lsu_C_sf"/>
</dbReference>
<dbReference type="InterPro" id="IPR017443">
    <property type="entry name" value="RuBisCO_lsu_fd_N"/>
</dbReference>
<dbReference type="InterPro" id="IPR036422">
    <property type="entry name" value="RuBisCO_lsu_N_sf"/>
</dbReference>
<dbReference type="InterPro" id="IPR020888">
    <property type="entry name" value="RuBisCO_lsuI"/>
</dbReference>
<dbReference type="NCBIfam" id="NF003252">
    <property type="entry name" value="PRK04208.1"/>
    <property type="match status" value="1"/>
</dbReference>
<dbReference type="PANTHER" id="PTHR42704">
    <property type="entry name" value="RIBULOSE BISPHOSPHATE CARBOXYLASE"/>
    <property type="match status" value="1"/>
</dbReference>
<dbReference type="PANTHER" id="PTHR42704:SF16">
    <property type="entry name" value="RIBULOSE BISPHOSPHATE CARBOXYLASE LARGE CHAIN"/>
    <property type="match status" value="1"/>
</dbReference>
<dbReference type="Pfam" id="PF00016">
    <property type="entry name" value="RuBisCO_large"/>
    <property type="match status" value="1"/>
</dbReference>
<dbReference type="Pfam" id="PF02788">
    <property type="entry name" value="RuBisCO_large_N"/>
    <property type="match status" value="1"/>
</dbReference>
<dbReference type="SFLD" id="SFLDG01052">
    <property type="entry name" value="RuBisCO"/>
    <property type="match status" value="1"/>
</dbReference>
<dbReference type="SFLD" id="SFLDS00014">
    <property type="entry name" value="RuBisCO"/>
    <property type="match status" value="1"/>
</dbReference>
<dbReference type="SFLD" id="SFLDG00301">
    <property type="entry name" value="RuBisCO-like_proteins"/>
    <property type="match status" value="1"/>
</dbReference>
<dbReference type="SUPFAM" id="SSF51649">
    <property type="entry name" value="RuBisCo, C-terminal domain"/>
    <property type="match status" value="1"/>
</dbReference>
<dbReference type="SUPFAM" id="SSF54966">
    <property type="entry name" value="RuBisCO, large subunit, small (N-terminal) domain"/>
    <property type="match status" value="1"/>
</dbReference>
<dbReference type="PROSITE" id="PS00157">
    <property type="entry name" value="RUBISCO_LARGE"/>
    <property type="match status" value="1"/>
</dbReference>
<geneLocation type="chloroplast"/>
<sequence>MSPQTETKASVGFKAGVKEYKLTYYTPEYQTKDTDILAAFRVTPQPGVPPEEAGAAVAAESSTGTWTTVWTDGLTSLDRYKGRCYRIERVVGEKDQYIAYVAYPLDLFEEGSVTNMFTSIVGNVFGFKALRALRLEDLRIPPAYVKTFQGPPHGIQVERDKLNKYGRPLLGCTIKPKLGLSAKNYGRAVYECLRGGLDFTKDDENVNSQPFMRWRDRFLFCAEALYKAQAETGEIKGHYLNATAGTCEEMIKRAVFARELGVPIVMHDYLTGGFTANTSLAHYCRDNGLLLHIHRAMHAVIDRQKNHGIHFRVLAKALRMSGGDHIHSGTVVGKLEGERDITLGFVDLLRDDFVEQDRSRGIYFTQDWVSLPGVLPVASGGIHVWHMPALTEIFGDDSVLQFGGGTLGHPWGNAPGAVANRVALEACVKARNEGRDLAQEGNEIIREACKWSPELAAACEVWKEIVFNFAAVDVLDK</sequence>
<evidence type="ECO:0000250" key="1">
    <source>
        <dbReference type="UniProtKB" id="P11383"/>
    </source>
</evidence>
<evidence type="ECO:0000269" key="2">
    <source>
    </source>
</evidence>
<evidence type="ECO:0000269" key="3">
    <source>
    </source>
</evidence>
<evidence type="ECO:0000269" key="4">
    <source>
    </source>
</evidence>
<evidence type="ECO:0000269" key="5">
    <source>
    </source>
</evidence>
<evidence type="ECO:0000269" key="6">
    <source ref="3"/>
</evidence>
<evidence type="ECO:0000305" key="7"/>
<evidence type="ECO:0007829" key="8">
    <source>
        <dbReference type="PDB" id="1EJ7"/>
    </source>
</evidence>
<evidence type="ECO:0007829" key="9">
    <source>
        <dbReference type="PDB" id="1RLD"/>
    </source>
</evidence>
<evidence type="ECO:0007829" key="10">
    <source>
        <dbReference type="PDB" id="3RUB"/>
    </source>
</evidence>
<accession>P00876</accession>
<accession>Q32716</accession>